<name>RBSD_BACCR</name>
<dbReference type="EC" id="5.4.99.62" evidence="1"/>
<dbReference type="EMBL" id="AE016877">
    <property type="protein sequence ID" value="AAP07676.1"/>
    <property type="molecule type" value="Genomic_DNA"/>
</dbReference>
<dbReference type="RefSeq" id="NP_830475.1">
    <property type="nucleotide sequence ID" value="NC_004722.1"/>
</dbReference>
<dbReference type="RefSeq" id="WP_000716152.1">
    <property type="nucleotide sequence ID" value="NZ_CP138336.1"/>
</dbReference>
<dbReference type="SMR" id="Q81HW9"/>
<dbReference type="STRING" id="226900.BC_0661"/>
<dbReference type="KEGG" id="bce:BC0661"/>
<dbReference type="PATRIC" id="fig|226900.8.peg.621"/>
<dbReference type="HOGENOM" id="CLU_135498_0_0_9"/>
<dbReference type="OrthoDB" id="9805009at2"/>
<dbReference type="UniPathway" id="UPA00916">
    <property type="reaction ID" value="UER00888"/>
</dbReference>
<dbReference type="Proteomes" id="UP000001417">
    <property type="component" value="Chromosome"/>
</dbReference>
<dbReference type="GO" id="GO:0005829">
    <property type="term" value="C:cytosol"/>
    <property type="evidence" value="ECO:0000318"/>
    <property type="project" value="GO_Central"/>
</dbReference>
<dbReference type="GO" id="GO:0062193">
    <property type="term" value="F:D-ribose pyranase activity"/>
    <property type="evidence" value="ECO:0007669"/>
    <property type="project" value="UniProtKB-EC"/>
</dbReference>
<dbReference type="GO" id="GO:0016872">
    <property type="term" value="F:intramolecular lyase activity"/>
    <property type="evidence" value="ECO:0007669"/>
    <property type="project" value="UniProtKB-UniRule"/>
</dbReference>
<dbReference type="GO" id="GO:0016866">
    <property type="term" value="F:intramolecular transferase activity"/>
    <property type="evidence" value="ECO:0000318"/>
    <property type="project" value="GO_Central"/>
</dbReference>
<dbReference type="GO" id="GO:0048029">
    <property type="term" value="F:monosaccharide binding"/>
    <property type="evidence" value="ECO:0007669"/>
    <property type="project" value="InterPro"/>
</dbReference>
<dbReference type="GO" id="GO:0019303">
    <property type="term" value="P:D-ribose catabolic process"/>
    <property type="evidence" value="ECO:0000318"/>
    <property type="project" value="GO_Central"/>
</dbReference>
<dbReference type="FunFam" id="3.40.1650.10:FF:000003">
    <property type="entry name" value="D-ribose pyranase"/>
    <property type="match status" value="1"/>
</dbReference>
<dbReference type="Gene3D" id="3.40.1650.10">
    <property type="entry name" value="RbsD-like domain"/>
    <property type="match status" value="1"/>
</dbReference>
<dbReference type="HAMAP" id="MF_01661">
    <property type="entry name" value="D_rib_pyranase"/>
    <property type="match status" value="1"/>
</dbReference>
<dbReference type="InterPro" id="IPR023064">
    <property type="entry name" value="D-ribose_pyranase"/>
</dbReference>
<dbReference type="InterPro" id="IPR023750">
    <property type="entry name" value="RbsD-like_sf"/>
</dbReference>
<dbReference type="InterPro" id="IPR007721">
    <property type="entry name" value="RbsD_FucU"/>
</dbReference>
<dbReference type="NCBIfam" id="NF008761">
    <property type="entry name" value="PRK11797.1"/>
    <property type="match status" value="1"/>
</dbReference>
<dbReference type="PANTHER" id="PTHR37831">
    <property type="entry name" value="D-RIBOSE PYRANASE"/>
    <property type="match status" value="1"/>
</dbReference>
<dbReference type="PANTHER" id="PTHR37831:SF1">
    <property type="entry name" value="D-RIBOSE PYRANASE"/>
    <property type="match status" value="1"/>
</dbReference>
<dbReference type="Pfam" id="PF05025">
    <property type="entry name" value="RbsD_FucU"/>
    <property type="match status" value="1"/>
</dbReference>
<dbReference type="SUPFAM" id="SSF102546">
    <property type="entry name" value="RbsD-like"/>
    <property type="match status" value="1"/>
</dbReference>
<sequence>MKKHGVLNSEIAAVLASLGHTDTVVIADCGLPIPDGVKRIDLAVEIGKPSFLEVLQVVADDMAIEKVTLAEEVIINNAEVNKEIERKLIEPAFEYVSHEQFKEHTKKAKAIIRTGEATPYANVILHAGVIF</sequence>
<comment type="function">
    <text evidence="1">Catalyzes the interconversion of beta-pyran and beta-furan forms of D-ribose.</text>
</comment>
<comment type="catalytic activity">
    <reaction evidence="1">
        <text>beta-D-ribopyranose = beta-D-ribofuranose</text>
        <dbReference type="Rhea" id="RHEA:25432"/>
        <dbReference type="ChEBI" id="CHEBI:27476"/>
        <dbReference type="ChEBI" id="CHEBI:47002"/>
        <dbReference type="EC" id="5.4.99.62"/>
    </reaction>
</comment>
<comment type="pathway">
    <text evidence="1">Carbohydrate metabolism; D-ribose degradation; D-ribose 5-phosphate from beta-D-ribopyranose: step 1/2.</text>
</comment>
<comment type="subunit">
    <text evidence="1">Homodecamer.</text>
</comment>
<comment type="subcellular location">
    <subcellularLocation>
        <location evidence="1">Cytoplasm</location>
    </subcellularLocation>
</comment>
<comment type="similarity">
    <text evidence="1">Belongs to the RbsD / FucU family. RbsD subfamily.</text>
</comment>
<feature type="chain" id="PRO_0000346172" description="D-ribose pyranase">
    <location>
        <begin position="1"/>
        <end position="131"/>
    </location>
</feature>
<feature type="active site" description="Proton donor" evidence="1">
    <location>
        <position position="20"/>
    </location>
</feature>
<feature type="binding site" evidence="1">
    <location>
        <position position="28"/>
    </location>
    <ligand>
        <name>substrate</name>
    </ligand>
</feature>
<feature type="binding site" evidence="1">
    <location>
        <position position="98"/>
    </location>
    <ligand>
        <name>substrate</name>
    </ligand>
</feature>
<feature type="binding site" evidence="1">
    <location>
        <begin position="120"/>
        <end position="122"/>
    </location>
    <ligand>
        <name>substrate</name>
    </ligand>
</feature>
<gene>
    <name evidence="1" type="primary">rbsD</name>
    <name type="ordered locus">BC_0661</name>
</gene>
<accession>Q81HW9</accession>
<evidence type="ECO:0000255" key="1">
    <source>
        <dbReference type="HAMAP-Rule" id="MF_01661"/>
    </source>
</evidence>
<reference key="1">
    <citation type="journal article" date="2003" name="Nature">
        <title>Genome sequence of Bacillus cereus and comparative analysis with Bacillus anthracis.</title>
        <authorList>
            <person name="Ivanova N."/>
            <person name="Sorokin A."/>
            <person name="Anderson I."/>
            <person name="Galleron N."/>
            <person name="Candelon B."/>
            <person name="Kapatral V."/>
            <person name="Bhattacharyya A."/>
            <person name="Reznik G."/>
            <person name="Mikhailova N."/>
            <person name="Lapidus A."/>
            <person name="Chu L."/>
            <person name="Mazur M."/>
            <person name="Goltsman E."/>
            <person name="Larsen N."/>
            <person name="D'Souza M."/>
            <person name="Walunas T."/>
            <person name="Grechkin Y."/>
            <person name="Pusch G."/>
            <person name="Haselkorn R."/>
            <person name="Fonstein M."/>
            <person name="Ehrlich S.D."/>
            <person name="Overbeek R."/>
            <person name="Kyrpides N.C."/>
        </authorList>
    </citation>
    <scope>NUCLEOTIDE SEQUENCE [LARGE SCALE GENOMIC DNA]</scope>
    <source>
        <strain>ATCC 14579 / DSM 31 / CCUG 7414 / JCM 2152 / NBRC 15305 / NCIMB 9373 / NCTC 2599 / NRRL B-3711</strain>
    </source>
</reference>
<proteinExistence type="inferred from homology"/>
<protein>
    <recommendedName>
        <fullName evidence="1">D-ribose pyranase</fullName>
        <ecNumber evidence="1">5.4.99.62</ecNumber>
    </recommendedName>
</protein>
<organism>
    <name type="scientific">Bacillus cereus (strain ATCC 14579 / DSM 31 / CCUG 7414 / JCM 2152 / NBRC 15305 / NCIMB 9373 / NCTC 2599 / NRRL B-3711)</name>
    <dbReference type="NCBI Taxonomy" id="226900"/>
    <lineage>
        <taxon>Bacteria</taxon>
        <taxon>Bacillati</taxon>
        <taxon>Bacillota</taxon>
        <taxon>Bacilli</taxon>
        <taxon>Bacillales</taxon>
        <taxon>Bacillaceae</taxon>
        <taxon>Bacillus</taxon>
        <taxon>Bacillus cereus group</taxon>
    </lineage>
</organism>
<keyword id="KW-0119">Carbohydrate metabolism</keyword>
<keyword id="KW-0963">Cytoplasm</keyword>
<keyword id="KW-0413">Isomerase</keyword>
<keyword id="KW-1185">Reference proteome</keyword>